<gene>
    <name evidence="1" type="primary">rps17e</name>
    <name type="ordered locus">TK2292</name>
</gene>
<keyword id="KW-0002">3D-structure</keyword>
<keyword id="KW-1185">Reference proteome</keyword>
<keyword id="KW-0687">Ribonucleoprotein</keyword>
<keyword id="KW-0689">Ribosomal protein</keyword>
<protein>
    <recommendedName>
        <fullName evidence="1">Small ribosomal subunit protein eS17</fullName>
    </recommendedName>
    <alternativeName>
        <fullName evidence="3">30S ribosomal protein S17e</fullName>
    </alternativeName>
</protein>
<sequence length="67" mass="8019">MGNIKQTFIKRTARELFDRYPDKFTRDFEHNKKMVAELTNVTSKTIRNRIAGYITRLVRMKEEGKIL</sequence>
<proteinExistence type="evidence at protein level"/>
<name>RS17E_THEKO</name>
<comment type="subunit">
    <text evidence="2">Part of the 30S ribosomal subunit.</text>
</comment>
<comment type="similarity">
    <text evidence="1">Belongs to the eukaryotic ribosomal protein eS17 family.</text>
</comment>
<evidence type="ECO:0000255" key="1">
    <source>
        <dbReference type="HAMAP-Rule" id="MF_00511"/>
    </source>
</evidence>
<evidence type="ECO:0000269" key="2">
    <source>
    </source>
</evidence>
<evidence type="ECO:0000305" key="3"/>
<evidence type="ECO:0007744" key="4">
    <source>
        <dbReference type="PDB" id="6SKF"/>
    </source>
</evidence>
<evidence type="ECO:0007744" key="5">
    <source>
        <dbReference type="PDB" id="6SKG"/>
    </source>
</evidence>
<evidence type="ECO:0007744" key="6">
    <source>
        <dbReference type="PDB" id="6TH6"/>
    </source>
</evidence>
<reference key="1">
    <citation type="journal article" date="2005" name="Genome Res.">
        <title>Complete genome sequence of the hyperthermophilic archaeon Thermococcus kodakaraensis KOD1 and comparison with Pyrococcus genomes.</title>
        <authorList>
            <person name="Fukui T."/>
            <person name="Atomi H."/>
            <person name="Kanai T."/>
            <person name="Matsumi R."/>
            <person name="Fujiwara S."/>
            <person name="Imanaka T."/>
        </authorList>
    </citation>
    <scope>NUCLEOTIDE SEQUENCE [LARGE SCALE GENOMIC DNA]</scope>
    <source>
        <strain>ATCC BAA-918 / JCM 12380 / KOD1</strain>
    </source>
</reference>
<reference evidence="4 5 6" key="2">
    <citation type="journal article" date="2020" name="Nature">
        <title>Dynamic RNA acetylation revealed by quantitative cross-evolutionary mapping.</title>
        <authorList>
            <person name="Sas-Chen A."/>
            <person name="Thomas J.M."/>
            <person name="Matzov D."/>
            <person name="Taoka M."/>
            <person name="Nance K.D."/>
            <person name="Nir R."/>
            <person name="Bryson K.M."/>
            <person name="Shachar R."/>
            <person name="Liman G.L.S."/>
            <person name="Burkhart B.W."/>
            <person name="Gamage S.T."/>
            <person name="Nobe Y."/>
            <person name="Briney C.A."/>
            <person name="Levy M.J."/>
            <person name="Fuchs R.T."/>
            <person name="Robb G.B."/>
            <person name="Hartmann J."/>
            <person name="Sharma S."/>
            <person name="Lin Q."/>
            <person name="Florens L."/>
            <person name="Washburn M.P."/>
            <person name="Isobe T."/>
            <person name="Santangelo T.J."/>
            <person name="Shalev-Benami M."/>
            <person name="Meier J.L."/>
            <person name="Schwartz S."/>
        </authorList>
    </citation>
    <scope>STRUCTURE BY ELECTRON MICROSCOPY (2.55 ANGSTROMS) IN 70S RIBOSOME</scope>
    <scope>SUBUNIT</scope>
    <source>
        <strain>ATCC BAA-918 / TS559</strain>
    </source>
</reference>
<feature type="chain" id="PRO_0000141564" description="Small ribosomal subunit protein eS17">
    <location>
        <begin position="1"/>
        <end position="67"/>
    </location>
</feature>
<accession>Q5JDC7</accession>
<organism>
    <name type="scientific">Thermococcus kodakarensis (strain ATCC BAA-918 / JCM 12380 / KOD1)</name>
    <name type="common">Pyrococcus kodakaraensis (strain KOD1)</name>
    <dbReference type="NCBI Taxonomy" id="69014"/>
    <lineage>
        <taxon>Archaea</taxon>
        <taxon>Methanobacteriati</taxon>
        <taxon>Methanobacteriota</taxon>
        <taxon>Thermococci</taxon>
        <taxon>Thermococcales</taxon>
        <taxon>Thermococcaceae</taxon>
        <taxon>Thermococcus</taxon>
    </lineage>
</organism>
<dbReference type="EMBL" id="AP006878">
    <property type="protein sequence ID" value="BAD86481.1"/>
    <property type="molecule type" value="Genomic_DNA"/>
</dbReference>
<dbReference type="RefSeq" id="WP_011251242.1">
    <property type="nucleotide sequence ID" value="NC_006624.1"/>
</dbReference>
<dbReference type="PDB" id="6SKF">
    <property type="method" value="EM"/>
    <property type="resolution" value="2.95 A"/>
    <property type="chains" value="At=1-67"/>
</dbReference>
<dbReference type="PDB" id="6SKG">
    <property type="method" value="EM"/>
    <property type="resolution" value="2.65 A"/>
    <property type="chains" value="At/Bm=1-67"/>
</dbReference>
<dbReference type="PDB" id="6TH6">
    <property type="method" value="EM"/>
    <property type="resolution" value="2.55 A"/>
    <property type="chains" value="At=1-67"/>
</dbReference>
<dbReference type="PDBsum" id="6SKF"/>
<dbReference type="PDBsum" id="6SKG"/>
<dbReference type="PDBsum" id="6TH6"/>
<dbReference type="EMDB" id="EMD-10223"/>
<dbReference type="EMDB" id="EMD-10224"/>
<dbReference type="EMDB" id="EMD-10503"/>
<dbReference type="SMR" id="Q5JDC7"/>
<dbReference type="FunCoup" id="Q5JDC7">
    <property type="interactions" value="61"/>
</dbReference>
<dbReference type="STRING" id="69014.TK2292"/>
<dbReference type="EnsemblBacteria" id="BAD86481">
    <property type="protein sequence ID" value="BAD86481"/>
    <property type="gene ID" value="TK2292"/>
</dbReference>
<dbReference type="GeneID" id="78448837"/>
<dbReference type="KEGG" id="tko:TK2292"/>
<dbReference type="PATRIC" id="fig|69014.16.peg.2247"/>
<dbReference type="eggNOG" id="arCOG01885">
    <property type="taxonomic scope" value="Archaea"/>
</dbReference>
<dbReference type="HOGENOM" id="CLU_176720_1_0_2"/>
<dbReference type="InParanoid" id="Q5JDC7"/>
<dbReference type="OrthoDB" id="52479at2157"/>
<dbReference type="PhylomeDB" id="Q5JDC7"/>
<dbReference type="Proteomes" id="UP000000536">
    <property type="component" value="Chromosome"/>
</dbReference>
<dbReference type="GO" id="GO:0005829">
    <property type="term" value="C:cytosol"/>
    <property type="evidence" value="ECO:0007669"/>
    <property type="project" value="UniProtKB-ARBA"/>
</dbReference>
<dbReference type="GO" id="GO:1990904">
    <property type="term" value="C:ribonucleoprotein complex"/>
    <property type="evidence" value="ECO:0007669"/>
    <property type="project" value="UniProtKB-KW"/>
</dbReference>
<dbReference type="GO" id="GO:0005840">
    <property type="term" value="C:ribosome"/>
    <property type="evidence" value="ECO:0007669"/>
    <property type="project" value="UniProtKB-KW"/>
</dbReference>
<dbReference type="GO" id="GO:0003735">
    <property type="term" value="F:structural constituent of ribosome"/>
    <property type="evidence" value="ECO:0007669"/>
    <property type="project" value="InterPro"/>
</dbReference>
<dbReference type="GO" id="GO:0006412">
    <property type="term" value="P:translation"/>
    <property type="evidence" value="ECO:0007669"/>
    <property type="project" value="UniProtKB-UniRule"/>
</dbReference>
<dbReference type="Gene3D" id="1.10.60.20">
    <property type="entry name" value="Ribosomal protein S17e-like"/>
    <property type="match status" value="1"/>
</dbReference>
<dbReference type="HAMAP" id="MF_00511">
    <property type="entry name" value="Ribosomal_eS17"/>
    <property type="match status" value="1"/>
</dbReference>
<dbReference type="InterPro" id="IPR001210">
    <property type="entry name" value="Ribosomal_eS17"/>
</dbReference>
<dbReference type="InterPro" id="IPR018273">
    <property type="entry name" value="Ribosomal_eS17_CS"/>
</dbReference>
<dbReference type="InterPro" id="IPR036401">
    <property type="entry name" value="Ribosomal_eS17_sf"/>
</dbReference>
<dbReference type="NCBIfam" id="NF002242">
    <property type="entry name" value="PRK01151.1"/>
    <property type="match status" value="1"/>
</dbReference>
<dbReference type="PANTHER" id="PTHR10732">
    <property type="entry name" value="40S RIBOSOMAL PROTEIN S17"/>
    <property type="match status" value="1"/>
</dbReference>
<dbReference type="PANTHER" id="PTHR10732:SF0">
    <property type="entry name" value="40S RIBOSOMAL PROTEIN S17"/>
    <property type="match status" value="1"/>
</dbReference>
<dbReference type="Pfam" id="PF00833">
    <property type="entry name" value="Ribosomal_S17e"/>
    <property type="match status" value="1"/>
</dbReference>
<dbReference type="SUPFAM" id="SSF116820">
    <property type="entry name" value="Rps17e-like"/>
    <property type="match status" value="1"/>
</dbReference>
<dbReference type="PROSITE" id="PS00712">
    <property type="entry name" value="RIBOSOMAL_S17E"/>
    <property type="match status" value="1"/>
</dbReference>